<proteinExistence type="predicted"/>
<organism>
    <name type="scientific">Escherichia phage P1</name>
    <name type="common">Bacteriophage P1</name>
    <dbReference type="NCBI Taxonomy" id="2886926"/>
    <lineage>
        <taxon>Viruses</taxon>
        <taxon>Duplodnaviria</taxon>
        <taxon>Heunggongvirae</taxon>
        <taxon>Uroviricota</taxon>
        <taxon>Caudoviricetes</taxon>
        <taxon>Punavirus</taxon>
        <taxon>Punavirus P1</taxon>
    </lineage>
</organism>
<name>VG16_BPP1</name>
<protein>
    <recommendedName>
        <fullName>Gene 16 protein</fullName>
    </recommendedName>
    <alternativeName>
        <fullName>Gp16</fullName>
    </alternativeName>
</protein>
<gene>
    <name type="primary">16</name>
</gene>
<sequence>DPIYAPVDLERHPYGTVLIPESTLETTGGTFGEMFLTSRGMISIPINDLARTMGITGTIDQSAITEEILRKFNQFVKPLLPLHIVFDGLTLYLSVVVNEHADMITLNEISDTEKAYCWFETSDTTSLTGVTSISAPITATPGGTIVKATPTFDRTRADDLLLDSDA</sequence>
<accession>P22587</accession>
<feature type="chain" id="PRO_0000165285" description="Gene 16 protein">
    <location>
        <begin position="1" status="less than"/>
        <end position="166"/>
    </location>
</feature>
<feature type="non-terminal residue">
    <location>
        <position position="1"/>
    </location>
</feature>
<dbReference type="EMBL" id="M25470">
    <property type="protein sequence ID" value="AAA58776.1"/>
    <property type="molecule type" value="Genomic_DNA"/>
</dbReference>
<dbReference type="EMBL" id="M81956">
    <property type="protein sequence ID" value="AAA32423.1"/>
    <property type="molecule type" value="Genomic_DNA"/>
</dbReference>
<dbReference type="EMBL" id="V01534">
    <property type="protein sequence ID" value="CAA24776.1"/>
    <property type="molecule type" value="Genomic_DNA"/>
</dbReference>
<dbReference type="PIR" id="PS0109">
    <property type="entry name" value="CSBPP1"/>
</dbReference>
<reference key="1">
    <citation type="journal article" date="1989" name="Gene">
        <title>Organization of the bacteriophage P1 tail-fibre operon.</title>
        <authorList>
            <person name="Guidolin A."/>
            <person name="Zingg J.-M."/>
            <person name="Arber W."/>
        </authorList>
    </citation>
    <scope>NUCLEOTIDE SEQUENCE [GENOMIC DNA]</scope>
</reference>
<reference key="2">
    <citation type="journal article" date="1992" name="J. Bacteriol.">
        <title>DNA inversion regions Min of plasmid p15B and Cin of bacteriophage P1: evolution of bacteriophage tail fiber genes.</title>
        <authorList>
            <person name="Sandmeier H."/>
            <person name="Iida S."/>
            <person name="Arber W."/>
        </authorList>
    </citation>
    <scope>NUCLEOTIDE SEQUENCE [GENOMIC DNA]</scope>
</reference>
<organismHost>
    <name type="scientific">Enterobacteriaceae</name>
    <dbReference type="NCBI Taxonomy" id="543"/>
</organismHost>